<reference key="1">
    <citation type="journal article" date="2005" name="J. Bacteriol.">
        <title>Insights on evolution of virulence and resistance from the complete genome analysis of an early methicillin-resistant Staphylococcus aureus strain and a biofilm-producing methicillin-resistant Staphylococcus epidermidis strain.</title>
        <authorList>
            <person name="Gill S.R."/>
            <person name="Fouts D.E."/>
            <person name="Archer G.L."/>
            <person name="Mongodin E.F."/>
            <person name="DeBoy R.T."/>
            <person name="Ravel J."/>
            <person name="Paulsen I.T."/>
            <person name="Kolonay J.F."/>
            <person name="Brinkac L.M."/>
            <person name="Beanan M.J."/>
            <person name="Dodson R.J."/>
            <person name="Daugherty S.C."/>
            <person name="Madupu R."/>
            <person name="Angiuoli S.V."/>
            <person name="Durkin A.S."/>
            <person name="Haft D.H."/>
            <person name="Vamathevan J.J."/>
            <person name="Khouri H."/>
            <person name="Utterback T.R."/>
            <person name="Lee C."/>
            <person name="Dimitrov G."/>
            <person name="Jiang L."/>
            <person name="Qin H."/>
            <person name="Weidman J."/>
            <person name="Tran K."/>
            <person name="Kang K.H."/>
            <person name="Hance I.R."/>
            <person name="Nelson K.E."/>
            <person name="Fraser C.M."/>
        </authorList>
    </citation>
    <scope>NUCLEOTIDE SEQUENCE [LARGE SCALE GENOMIC DNA]</scope>
    <source>
        <strain>COL</strain>
    </source>
</reference>
<organism>
    <name type="scientific">Staphylococcus aureus (strain COL)</name>
    <dbReference type="NCBI Taxonomy" id="93062"/>
    <lineage>
        <taxon>Bacteria</taxon>
        <taxon>Bacillati</taxon>
        <taxon>Bacillota</taxon>
        <taxon>Bacilli</taxon>
        <taxon>Bacillales</taxon>
        <taxon>Staphylococcaceae</taxon>
        <taxon>Staphylococcus</taxon>
    </lineage>
</organism>
<name>ARGC_STAAC</name>
<sequence>MIKVGIVGGSGYGAIELIRLLQTHPHVTIAHIYSHSKVDEPLKLTFPHLQHIMQHFEALTVDNNDCDVIFFATPAPVSKTCIPPLVEKGIHVIDLSGAFRIKNREIYEAYYKETAAAQDDLNHAIYSISEWQSFDNNGTKLISNPGCFPTATLLALHPLISEKIVDLSSIIIDAKTGVSGAGRSLSQRVHFSEMNENLSAYAIGNHKHKPEIEQYLSIIAGQDVSVIFTPHLVPMTRGILSTIYVKLSSEYTTESLHKLMTSYYANQPFVRIRDIGTFPTTKEVLGSNYCDIGIYVDETTQTAILVSVIDNLVKGASGQAIQNLNILYDFEVTTGLNQSPVYP</sequence>
<gene>
    <name evidence="1" type="primary">argC</name>
    <name type="ordered locus">SACOL0169</name>
</gene>
<feature type="chain" id="PRO_0000112448" description="N-acetyl-gamma-glutamyl-phosphate reductase">
    <location>
        <begin position="1"/>
        <end position="343"/>
    </location>
</feature>
<feature type="active site" evidence="1">
    <location>
        <position position="147"/>
    </location>
</feature>
<keyword id="KW-0028">Amino-acid biosynthesis</keyword>
<keyword id="KW-0055">Arginine biosynthesis</keyword>
<keyword id="KW-0963">Cytoplasm</keyword>
<keyword id="KW-0521">NADP</keyword>
<keyword id="KW-0560">Oxidoreductase</keyword>
<evidence type="ECO:0000255" key="1">
    <source>
        <dbReference type="HAMAP-Rule" id="MF_00150"/>
    </source>
</evidence>
<comment type="function">
    <text evidence="1">Catalyzes the NADPH-dependent reduction of N-acetyl-5-glutamyl phosphate to yield N-acetyl-L-glutamate 5-semialdehyde.</text>
</comment>
<comment type="catalytic activity">
    <reaction evidence="1">
        <text>N-acetyl-L-glutamate 5-semialdehyde + phosphate + NADP(+) = N-acetyl-L-glutamyl 5-phosphate + NADPH + H(+)</text>
        <dbReference type="Rhea" id="RHEA:21588"/>
        <dbReference type="ChEBI" id="CHEBI:15378"/>
        <dbReference type="ChEBI" id="CHEBI:29123"/>
        <dbReference type="ChEBI" id="CHEBI:43474"/>
        <dbReference type="ChEBI" id="CHEBI:57783"/>
        <dbReference type="ChEBI" id="CHEBI:57936"/>
        <dbReference type="ChEBI" id="CHEBI:58349"/>
        <dbReference type="EC" id="1.2.1.38"/>
    </reaction>
</comment>
<comment type="pathway">
    <text evidence="1">Amino-acid biosynthesis; L-arginine biosynthesis; N(2)-acetyl-L-ornithine from L-glutamate: step 3/4.</text>
</comment>
<comment type="subcellular location">
    <subcellularLocation>
        <location evidence="1">Cytoplasm</location>
    </subcellularLocation>
</comment>
<comment type="similarity">
    <text evidence="1">Belongs to the NAGSA dehydrogenase family. Type 1 subfamily.</text>
</comment>
<accession>Q5HJI9</accession>
<dbReference type="EC" id="1.2.1.38" evidence="1"/>
<dbReference type="EMBL" id="CP000046">
    <property type="protein sequence ID" value="AAW37465.1"/>
    <property type="molecule type" value="Genomic_DNA"/>
</dbReference>
<dbReference type="RefSeq" id="WP_000598483.1">
    <property type="nucleotide sequence ID" value="NZ_JBGOFO010000001.1"/>
</dbReference>
<dbReference type="SMR" id="Q5HJI9"/>
<dbReference type="KEGG" id="sac:SACOL0169"/>
<dbReference type="HOGENOM" id="CLU_006384_0_1_9"/>
<dbReference type="UniPathway" id="UPA00068">
    <property type="reaction ID" value="UER00108"/>
</dbReference>
<dbReference type="Proteomes" id="UP000000530">
    <property type="component" value="Chromosome"/>
</dbReference>
<dbReference type="GO" id="GO:0005737">
    <property type="term" value="C:cytoplasm"/>
    <property type="evidence" value="ECO:0007669"/>
    <property type="project" value="UniProtKB-SubCell"/>
</dbReference>
<dbReference type="GO" id="GO:0003942">
    <property type="term" value="F:N-acetyl-gamma-glutamyl-phosphate reductase activity"/>
    <property type="evidence" value="ECO:0007669"/>
    <property type="project" value="UniProtKB-UniRule"/>
</dbReference>
<dbReference type="GO" id="GO:0051287">
    <property type="term" value="F:NAD binding"/>
    <property type="evidence" value="ECO:0007669"/>
    <property type="project" value="InterPro"/>
</dbReference>
<dbReference type="GO" id="GO:0070401">
    <property type="term" value="F:NADP+ binding"/>
    <property type="evidence" value="ECO:0007669"/>
    <property type="project" value="InterPro"/>
</dbReference>
<dbReference type="GO" id="GO:0006526">
    <property type="term" value="P:L-arginine biosynthetic process"/>
    <property type="evidence" value="ECO:0007669"/>
    <property type="project" value="UniProtKB-UniRule"/>
</dbReference>
<dbReference type="CDD" id="cd23934">
    <property type="entry name" value="AGPR_1_C"/>
    <property type="match status" value="1"/>
</dbReference>
<dbReference type="CDD" id="cd17895">
    <property type="entry name" value="AGPR_1_N"/>
    <property type="match status" value="1"/>
</dbReference>
<dbReference type="FunFam" id="3.30.360.10:FF:000014">
    <property type="entry name" value="N-acetyl-gamma-glutamyl-phosphate reductase"/>
    <property type="match status" value="1"/>
</dbReference>
<dbReference type="Gene3D" id="3.30.360.10">
    <property type="entry name" value="Dihydrodipicolinate Reductase, domain 2"/>
    <property type="match status" value="1"/>
</dbReference>
<dbReference type="Gene3D" id="3.40.50.720">
    <property type="entry name" value="NAD(P)-binding Rossmann-like Domain"/>
    <property type="match status" value="1"/>
</dbReference>
<dbReference type="HAMAP" id="MF_00150">
    <property type="entry name" value="ArgC_type1"/>
    <property type="match status" value="1"/>
</dbReference>
<dbReference type="InterPro" id="IPR023013">
    <property type="entry name" value="AGPR_AS"/>
</dbReference>
<dbReference type="InterPro" id="IPR000706">
    <property type="entry name" value="AGPR_type-1"/>
</dbReference>
<dbReference type="InterPro" id="IPR036291">
    <property type="entry name" value="NAD(P)-bd_dom_sf"/>
</dbReference>
<dbReference type="InterPro" id="IPR050085">
    <property type="entry name" value="NAGSA_dehydrogenase"/>
</dbReference>
<dbReference type="InterPro" id="IPR000534">
    <property type="entry name" value="Semialdehyde_DH_NAD-bd"/>
</dbReference>
<dbReference type="NCBIfam" id="TIGR01850">
    <property type="entry name" value="argC"/>
    <property type="match status" value="1"/>
</dbReference>
<dbReference type="PANTHER" id="PTHR32338:SF10">
    <property type="entry name" value="N-ACETYL-GAMMA-GLUTAMYL-PHOSPHATE REDUCTASE, CHLOROPLASTIC-RELATED"/>
    <property type="match status" value="1"/>
</dbReference>
<dbReference type="PANTHER" id="PTHR32338">
    <property type="entry name" value="N-ACETYL-GAMMA-GLUTAMYL-PHOSPHATE REDUCTASE, CHLOROPLASTIC-RELATED-RELATED"/>
    <property type="match status" value="1"/>
</dbReference>
<dbReference type="Pfam" id="PF01118">
    <property type="entry name" value="Semialdhyde_dh"/>
    <property type="match status" value="1"/>
</dbReference>
<dbReference type="Pfam" id="PF22698">
    <property type="entry name" value="Semialdhyde_dhC_1"/>
    <property type="match status" value="1"/>
</dbReference>
<dbReference type="SMART" id="SM00859">
    <property type="entry name" value="Semialdhyde_dh"/>
    <property type="match status" value="1"/>
</dbReference>
<dbReference type="SUPFAM" id="SSF55347">
    <property type="entry name" value="Glyceraldehyde-3-phosphate dehydrogenase-like, C-terminal domain"/>
    <property type="match status" value="1"/>
</dbReference>
<dbReference type="SUPFAM" id="SSF51735">
    <property type="entry name" value="NAD(P)-binding Rossmann-fold domains"/>
    <property type="match status" value="1"/>
</dbReference>
<dbReference type="PROSITE" id="PS01224">
    <property type="entry name" value="ARGC"/>
    <property type="match status" value="1"/>
</dbReference>
<protein>
    <recommendedName>
        <fullName evidence="1">N-acetyl-gamma-glutamyl-phosphate reductase</fullName>
        <shortName evidence="1">AGPR</shortName>
        <ecNumber evidence="1">1.2.1.38</ecNumber>
    </recommendedName>
    <alternativeName>
        <fullName evidence="1">N-acetyl-glutamate semialdehyde dehydrogenase</fullName>
        <shortName evidence="1">NAGSA dehydrogenase</shortName>
    </alternativeName>
</protein>
<proteinExistence type="inferred from homology"/>